<sequence length="513" mass="56663">MKNLLTNPQPSQSDYINAIVKLGSRVYEAAQVTPLQKMGKLSERLHNNIWIKREDRQPVNSFKLRGAYAMISSLSAEQKAAGVIAASAGNHAQGVALSAKQLGLKALIVMPQNTPSIKVDAVRGFGGEVLLHGANFDEAKAKAIELSKEKNMTFIPPFDHPLVIAGQGTLAMEMLQQVADLDYVFVQVGGGGLAAGVAILLKQFMPEIKIIGVESKDSACLKAALDKGEPTDLTHIGLFADGVAVKRIGDETFRLCQQYLDDMVLVDSDEVCAAMKDLFENVRAVAEPSGALGLAGLKKYVKQNHIEGKNMAAILSGANLNFHTLRYVSERCEIGENREALLAVTMPEQPGSFLKFAYVLGNRAVTEFSYRYADDKRACVFVGVRTTNEQEKADIIADLTKNGFDVEDMSDDDIAKTHVRYLMGGRAANDNERLYTFEFPEQKGALLKFLETLQNRWNISLFHYRAHGADYGNILAGFQIEQREQAEFEQGLAQLNYVFEDVTKSKSYRYFLR</sequence>
<evidence type="ECO:0000250" key="1"/>
<evidence type="ECO:0000255" key="2">
    <source>
        <dbReference type="PROSITE-ProRule" id="PRU01008"/>
    </source>
</evidence>
<evidence type="ECO:0000305" key="3"/>
<gene>
    <name type="primary">ilvA</name>
    <name type="ordered locus">HI_0738.1</name>
</gene>
<dbReference type="EC" id="4.3.1.19"/>
<dbReference type="EMBL" id="L42023">
    <property type="protein sequence ID" value="AAC22398.1"/>
    <property type="molecule type" value="Genomic_DNA"/>
</dbReference>
<dbReference type="RefSeq" id="NP_438898.1">
    <property type="nucleotide sequence ID" value="NC_000907.1"/>
</dbReference>
<dbReference type="SMR" id="P46493"/>
<dbReference type="STRING" id="71421.HI_0738.1"/>
<dbReference type="EnsemblBacteria" id="AAC22398">
    <property type="protein sequence ID" value="AAC22398"/>
    <property type="gene ID" value="HI_0738.1"/>
</dbReference>
<dbReference type="KEGG" id="hin:HI_0738.1"/>
<dbReference type="PATRIC" id="fig|71421.8.peg.775"/>
<dbReference type="eggNOG" id="COG1171">
    <property type="taxonomic scope" value="Bacteria"/>
</dbReference>
<dbReference type="HOGENOM" id="CLU_021152_6_1_6"/>
<dbReference type="OrthoDB" id="9811476at2"/>
<dbReference type="PhylomeDB" id="P46493"/>
<dbReference type="BioCyc" id="HINF71421:G1GJ1-777-MONOMER"/>
<dbReference type="UniPathway" id="UPA00047">
    <property type="reaction ID" value="UER00054"/>
</dbReference>
<dbReference type="Proteomes" id="UP000000579">
    <property type="component" value="Chromosome"/>
</dbReference>
<dbReference type="GO" id="GO:0030170">
    <property type="term" value="F:pyridoxal phosphate binding"/>
    <property type="evidence" value="ECO:0007669"/>
    <property type="project" value="InterPro"/>
</dbReference>
<dbReference type="GO" id="GO:0004794">
    <property type="term" value="F:threonine deaminase activity"/>
    <property type="evidence" value="ECO:0000318"/>
    <property type="project" value="GO_Central"/>
</dbReference>
<dbReference type="GO" id="GO:0009097">
    <property type="term" value="P:isoleucine biosynthetic process"/>
    <property type="evidence" value="ECO:0000318"/>
    <property type="project" value="GO_Central"/>
</dbReference>
<dbReference type="GO" id="GO:0006566">
    <property type="term" value="P:threonine metabolic process"/>
    <property type="evidence" value="ECO:0000250"/>
    <property type="project" value="UniProtKB"/>
</dbReference>
<dbReference type="CDD" id="cd04906">
    <property type="entry name" value="ACT_ThrD-I_1"/>
    <property type="match status" value="1"/>
</dbReference>
<dbReference type="CDD" id="cd04907">
    <property type="entry name" value="ACT_ThrD-I_2"/>
    <property type="match status" value="1"/>
</dbReference>
<dbReference type="CDD" id="cd01562">
    <property type="entry name" value="Thr-dehyd"/>
    <property type="match status" value="1"/>
</dbReference>
<dbReference type="FunFam" id="3.40.1020.10:FF:000001">
    <property type="entry name" value="L-threonine dehydratase"/>
    <property type="match status" value="1"/>
</dbReference>
<dbReference type="FunFam" id="3.40.50.1100:FF:000008">
    <property type="entry name" value="L-threonine dehydratase"/>
    <property type="match status" value="1"/>
</dbReference>
<dbReference type="Gene3D" id="3.40.50.1100">
    <property type="match status" value="2"/>
</dbReference>
<dbReference type="Gene3D" id="3.40.1020.10">
    <property type="entry name" value="Biosynthetic Threonine Deaminase, Domain 3"/>
    <property type="match status" value="1"/>
</dbReference>
<dbReference type="InterPro" id="IPR045865">
    <property type="entry name" value="ACT-like_dom_sf"/>
</dbReference>
<dbReference type="InterPro" id="IPR050147">
    <property type="entry name" value="Ser/Thr_Dehydratase"/>
</dbReference>
<dbReference type="InterPro" id="IPR000634">
    <property type="entry name" value="Ser/Thr_deHydtase_PyrdxlP-BS"/>
</dbReference>
<dbReference type="InterPro" id="IPR001721">
    <property type="entry name" value="TD_ACT-like"/>
</dbReference>
<dbReference type="InterPro" id="IPR038110">
    <property type="entry name" value="TD_ACT-like_sf"/>
</dbReference>
<dbReference type="InterPro" id="IPR005787">
    <property type="entry name" value="Thr_deHydtase_biosynth"/>
</dbReference>
<dbReference type="InterPro" id="IPR001926">
    <property type="entry name" value="TrpB-like_PALP"/>
</dbReference>
<dbReference type="InterPro" id="IPR036052">
    <property type="entry name" value="TrpB-like_PALP_sf"/>
</dbReference>
<dbReference type="NCBIfam" id="TIGR01124">
    <property type="entry name" value="ilvA_2Cterm"/>
    <property type="match status" value="1"/>
</dbReference>
<dbReference type="NCBIfam" id="NF006674">
    <property type="entry name" value="PRK09224.1"/>
    <property type="match status" value="1"/>
</dbReference>
<dbReference type="PANTHER" id="PTHR48078:SF11">
    <property type="entry name" value="THREONINE DEHYDRATASE, MITOCHONDRIAL"/>
    <property type="match status" value="1"/>
</dbReference>
<dbReference type="PANTHER" id="PTHR48078">
    <property type="entry name" value="THREONINE DEHYDRATASE, MITOCHONDRIAL-RELATED"/>
    <property type="match status" value="1"/>
</dbReference>
<dbReference type="Pfam" id="PF00291">
    <property type="entry name" value="PALP"/>
    <property type="match status" value="1"/>
</dbReference>
<dbReference type="Pfam" id="PF00585">
    <property type="entry name" value="Thr_dehydrat_C"/>
    <property type="match status" value="2"/>
</dbReference>
<dbReference type="SUPFAM" id="SSF55021">
    <property type="entry name" value="ACT-like"/>
    <property type="match status" value="2"/>
</dbReference>
<dbReference type="SUPFAM" id="SSF53686">
    <property type="entry name" value="Tryptophan synthase beta subunit-like PLP-dependent enzymes"/>
    <property type="match status" value="1"/>
</dbReference>
<dbReference type="PROSITE" id="PS51672">
    <property type="entry name" value="ACT_LIKE"/>
    <property type="match status" value="2"/>
</dbReference>
<dbReference type="PROSITE" id="PS00165">
    <property type="entry name" value="DEHYDRATASE_SER_THR"/>
    <property type="match status" value="1"/>
</dbReference>
<name>ILVA_HAEIN</name>
<reference key="1">
    <citation type="journal article" date="1995" name="Science">
        <title>Whole-genome random sequencing and assembly of Haemophilus influenzae Rd.</title>
        <authorList>
            <person name="Fleischmann R.D."/>
            <person name="Adams M.D."/>
            <person name="White O."/>
            <person name="Clayton R.A."/>
            <person name="Kirkness E.F."/>
            <person name="Kerlavage A.R."/>
            <person name="Bult C.J."/>
            <person name="Tomb J.-F."/>
            <person name="Dougherty B.A."/>
            <person name="Merrick J.M."/>
            <person name="McKenney K."/>
            <person name="Sutton G.G."/>
            <person name="FitzHugh W."/>
            <person name="Fields C.A."/>
            <person name="Gocayne J.D."/>
            <person name="Scott J.D."/>
            <person name="Shirley R."/>
            <person name="Liu L.-I."/>
            <person name="Glodek A."/>
            <person name="Kelley J.M."/>
            <person name="Weidman J.F."/>
            <person name="Phillips C.A."/>
            <person name="Spriggs T."/>
            <person name="Hedblom E."/>
            <person name="Cotton M.D."/>
            <person name="Utterback T.R."/>
            <person name="Hanna M.C."/>
            <person name="Nguyen D.T."/>
            <person name="Saudek D.M."/>
            <person name="Brandon R.C."/>
            <person name="Fine L.D."/>
            <person name="Fritchman J.L."/>
            <person name="Fuhrmann J.L."/>
            <person name="Geoghagen N.S.M."/>
            <person name="Gnehm C.L."/>
            <person name="McDonald L.A."/>
            <person name="Small K.V."/>
            <person name="Fraser C.M."/>
            <person name="Smith H.O."/>
            <person name="Venter J.C."/>
        </authorList>
    </citation>
    <scope>NUCLEOTIDE SEQUENCE [LARGE SCALE GENOMIC DNA]</scope>
    <source>
        <strain>ATCC 51907 / DSM 11121 / KW20 / Rd</strain>
    </source>
</reference>
<reference key="2">
    <citation type="submission" date="1995-09" db="UniProtKB">
        <authorList>
            <person name="Koonin E.V."/>
            <person name="Rudd K.E."/>
        </authorList>
    </citation>
    <scope>IDENTIFICATION</scope>
</reference>
<keyword id="KW-0028">Amino-acid biosynthesis</keyword>
<keyword id="KW-0100">Branched-chain amino acid biosynthesis</keyword>
<keyword id="KW-0412">Isoleucine biosynthesis</keyword>
<keyword id="KW-0456">Lyase</keyword>
<keyword id="KW-0663">Pyridoxal phosphate</keyword>
<keyword id="KW-1185">Reference proteome</keyword>
<keyword id="KW-0677">Repeat</keyword>
<accession>P46493</accession>
<feature type="chain" id="PRO_0000185574" description="L-threonine dehydratase biosynthetic IlvA">
    <location>
        <begin position="1"/>
        <end position="513"/>
    </location>
</feature>
<feature type="domain" description="ACT-like 1" evidence="2">
    <location>
        <begin position="340"/>
        <end position="411"/>
    </location>
</feature>
<feature type="domain" description="ACT-like 2" evidence="2">
    <location>
        <begin position="433"/>
        <end position="504"/>
    </location>
</feature>
<feature type="binding site" evidence="1">
    <location>
        <position position="90"/>
    </location>
    <ligand>
        <name>pyridoxal 5'-phosphate</name>
        <dbReference type="ChEBI" id="CHEBI:597326"/>
    </ligand>
</feature>
<feature type="binding site" evidence="1">
    <location>
        <begin position="189"/>
        <end position="193"/>
    </location>
    <ligand>
        <name>pyridoxal 5'-phosphate</name>
        <dbReference type="ChEBI" id="CHEBI:597326"/>
    </ligand>
</feature>
<feature type="binding site" evidence="1">
    <location>
        <position position="316"/>
    </location>
    <ligand>
        <name>pyridoxal 5'-phosphate</name>
        <dbReference type="ChEBI" id="CHEBI:597326"/>
    </ligand>
</feature>
<feature type="modified residue" description="N6-(pyridoxal phosphate)lysine" evidence="1">
    <location>
        <position position="63"/>
    </location>
</feature>
<protein>
    <recommendedName>
        <fullName>L-threonine dehydratase biosynthetic IlvA</fullName>
        <ecNumber>4.3.1.19</ecNumber>
    </recommendedName>
    <alternativeName>
        <fullName>Threonine deaminase</fullName>
    </alternativeName>
</protein>
<organism>
    <name type="scientific">Haemophilus influenzae (strain ATCC 51907 / DSM 11121 / KW20 / Rd)</name>
    <dbReference type="NCBI Taxonomy" id="71421"/>
    <lineage>
        <taxon>Bacteria</taxon>
        <taxon>Pseudomonadati</taxon>
        <taxon>Pseudomonadota</taxon>
        <taxon>Gammaproteobacteria</taxon>
        <taxon>Pasteurellales</taxon>
        <taxon>Pasteurellaceae</taxon>
        <taxon>Haemophilus</taxon>
    </lineage>
</organism>
<comment type="function">
    <text evidence="1">Catalyzes the anaerobic formation of alpha-ketobutyrate and ammonia from threonine in a two-step reaction. The first step involved a dehydration of threonine and a production of enamine intermediates (aminocrotonate), which tautomerizes to its imine form (iminobutyrate). Both intermediates are unstable and short-lived. The second step is the nonenzymatic hydrolysis of the enamine/imine intermediates to form 2-ketobutyrate and free ammonia. In the low water environment of the cell, the second step is accelerated by RidA (By similarity).</text>
</comment>
<comment type="catalytic activity">
    <reaction>
        <text>L-threonine = 2-oxobutanoate + NH4(+)</text>
        <dbReference type="Rhea" id="RHEA:22108"/>
        <dbReference type="ChEBI" id="CHEBI:16763"/>
        <dbReference type="ChEBI" id="CHEBI:28938"/>
        <dbReference type="ChEBI" id="CHEBI:57926"/>
        <dbReference type="EC" id="4.3.1.19"/>
    </reaction>
</comment>
<comment type="cofactor">
    <cofactor evidence="1">
        <name>pyridoxal 5'-phosphate</name>
        <dbReference type="ChEBI" id="CHEBI:597326"/>
    </cofactor>
</comment>
<comment type="pathway">
    <text>Amino-acid biosynthesis; L-isoleucine biosynthesis; 2-oxobutanoate from L-threonine: step 1/1.</text>
</comment>
<comment type="subunit">
    <text evidence="1">Homotetramer.</text>
</comment>
<comment type="similarity">
    <text evidence="3">Belongs to the serine/threonine dehydratase family.</text>
</comment>
<proteinExistence type="inferred from homology"/>